<feature type="chain" id="PRO_0000090617" description="Solute carrier family 25 member 16">
    <location>
        <begin position="1"/>
        <end position="332"/>
    </location>
</feature>
<feature type="transmembrane region" description="Helical; Name=1" evidence="3">
    <location>
        <begin position="37"/>
        <end position="57"/>
    </location>
</feature>
<feature type="transmembrane region" description="Helical; Name=2" evidence="3">
    <location>
        <begin position="88"/>
        <end position="108"/>
    </location>
</feature>
<feature type="transmembrane region" description="Helical; Name=3" evidence="3">
    <location>
        <begin position="134"/>
        <end position="154"/>
    </location>
</feature>
<feature type="transmembrane region" description="Helical; Name=4" evidence="3">
    <location>
        <begin position="191"/>
        <end position="211"/>
    </location>
</feature>
<feature type="transmembrane region" description="Helical; Name=5" evidence="3">
    <location>
        <begin position="244"/>
        <end position="264"/>
    </location>
</feature>
<feature type="transmembrane region" description="Helical; Name=6" evidence="3">
    <location>
        <begin position="299"/>
        <end position="319"/>
    </location>
</feature>
<feature type="repeat" description="Solcar 1">
    <location>
        <begin position="34"/>
        <end position="120"/>
    </location>
</feature>
<feature type="repeat" description="Solcar 2">
    <location>
        <begin position="128"/>
        <end position="216"/>
    </location>
</feature>
<feature type="repeat" description="Solcar 3">
    <location>
        <begin position="238"/>
        <end position="328"/>
    </location>
</feature>
<feature type="splice variant" id="VSP_016549" description="In isoform 2." evidence="4">
    <original>VLSTLR</original>
    <variation>EFYMQS</variation>
    <location>
        <begin position="76"/>
        <end position="81"/>
    </location>
</feature>
<feature type="splice variant" id="VSP_016550" description="In isoform 2." evidence="4">
    <location>
        <begin position="82"/>
        <end position="332"/>
    </location>
</feature>
<comment type="function">
    <text evidence="1">May be involved in the transport of coenzyme A in the mitochondrial matrix. Very little is known about the physiological function of this carrier.</text>
</comment>
<comment type="subcellular location">
    <subcellularLocation>
        <location evidence="1">Mitochondrion inner membrane</location>
        <topology evidence="3">Multi-pass membrane protein</topology>
    </subcellularLocation>
</comment>
<comment type="alternative products">
    <event type="alternative splicing"/>
    <isoform>
        <id>Q8C0K5-1</id>
        <name>1</name>
        <sequence type="displayed"/>
    </isoform>
    <isoform>
        <id>Q8C0K5-2</id>
        <name>2</name>
        <sequence type="described" ref="VSP_016549 VSP_016550"/>
    </isoform>
</comment>
<comment type="similarity">
    <text evidence="5">Belongs to the mitochondrial carrier (TC 2.A.29) family.</text>
</comment>
<name>GDC_MOUSE</name>
<sequence length="332" mass="36220">MAALVAAAALAAAEPAPAVPQAAGSGGPTSRRDFYWLRSFLAGGIAGCCAKTTVAPLDRVKVLLQAHNRHYKHLGVLSTLRAVPQKEGYLGLYKGNGAMMIRIFPYGAIQFMAFEHYKTFITTKLGVSGHVHRLMAGSMAGMTAVICTYPLDVVRVRLAFQVKGEHTYSGIIHAFKTIYAKEGGFLGFYRGLMPTILGMAPYAGVSFFTFGTLKSVGLSYAPALLGRPSSDNPNVLVLKTHINLLCGGVAGAIAQTISYPFDVTRRRMQLGAVLPEFEKCLTMRETMKYVYGQHGIRRGLYRGLSLNYIRCIPSQAVAFTTYELMKQFFHLN</sequence>
<evidence type="ECO:0000250" key="1">
    <source>
        <dbReference type="UniProtKB" id="P16260"/>
    </source>
</evidence>
<evidence type="ECO:0000250" key="2">
    <source>
        <dbReference type="UniProtKB" id="Q01888"/>
    </source>
</evidence>
<evidence type="ECO:0000255" key="3"/>
<evidence type="ECO:0000303" key="4">
    <source>
    </source>
</evidence>
<evidence type="ECO:0000305" key="5"/>
<evidence type="ECO:0000312" key="6">
    <source>
        <dbReference type="MGI" id="MGI:1920382"/>
    </source>
</evidence>
<keyword id="KW-0025">Alternative splicing</keyword>
<keyword id="KW-0472">Membrane</keyword>
<keyword id="KW-0496">Mitochondrion</keyword>
<keyword id="KW-0999">Mitochondrion inner membrane</keyword>
<keyword id="KW-1185">Reference proteome</keyword>
<keyword id="KW-0677">Repeat</keyword>
<keyword id="KW-0812">Transmembrane</keyword>
<keyword id="KW-1133">Transmembrane helix</keyword>
<keyword id="KW-0813">Transport</keyword>
<protein>
    <recommendedName>
        <fullName>Solute carrier family 25 member 16</fullName>
    </recommendedName>
    <alternativeName>
        <fullName evidence="2">Graves disease carrier protein homolog</fullName>
        <shortName evidence="2">GDC</shortName>
    </alternativeName>
    <alternativeName>
        <fullName>Mitochondrial solute carrier protein homolog</fullName>
    </alternativeName>
</protein>
<organism>
    <name type="scientific">Mus musculus</name>
    <name type="common">Mouse</name>
    <dbReference type="NCBI Taxonomy" id="10090"/>
    <lineage>
        <taxon>Eukaryota</taxon>
        <taxon>Metazoa</taxon>
        <taxon>Chordata</taxon>
        <taxon>Craniata</taxon>
        <taxon>Vertebrata</taxon>
        <taxon>Euteleostomi</taxon>
        <taxon>Mammalia</taxon>
        <taxon>Eutheria</taxon>
        <taxon>Euarchontoglires</taxon>
        <taxon>Glires</taxon>
        <taxon>Rodentia</taxon>
        <taxon>Myomorpha</taxon>
        <taxon>Muroidea</taxon>
        <taxon>Muridae</taxon>
        <taxon>Murinae</taxon>
        <taxon>Mus</taxon>
        <taxon>Mus</taxon>
    </lineage>
</organism>
<dbReference type="EMBL" id="AK030865">
    <property type="protein sequence ID" value="BAC27163.1"/>
    <property type="molecule type" value="mRNA"/>
</dbReference>
<dbReference type="EMBL" id="BC062168">
    <property type="protein sequence ID" value="AAH62168.1"/>
    <property type="molecule type" value="mRNA"/>
</dbReference>
<dbReference type="EMBL" id="BC138983">
    <property type="protein sequence ID" value="AAI38984.1"/>
    <property type="molecule type" value="mRNA"/>
</dbReference>
<dbReference type="EMBL" id="BC138984">
    <property type="protein sequence ID" value="AAI38985.1"/>
    <property type="molecule type" value="mRNA"/>
</dbReference>
<dbReference type="CCDS" id="CCDS23893.1">
    <molecule id="Q8C0K5-1"/>
</dbReference>
<dbReference type="RefSeq" id="NP_780403.1">
    <molecule id="Q8C0K5-1"/>
    <property type="nucleotide sequence ID" value="NM_175194.3"/>
</dbReference>
<dbReference type="SMR" id="Q8C0K5"/>
<dbReference type="FunCoup" id="Q8C0K5">
    <property type="interactions" value="1348"/>
</dbReference>
<dbReference type="IntAct" id="Q8C0K5">
    <property type="interactions" value="1"/>
</dbReference>
<dbReference type="STRING" id="10090.ENSMUSP00000043370"/>
<dbReference type="PhosphoSitePlus" id="Q8C0K5"/>
<dbReference type="SwissPalm" id="Q8C0K5"/>
<dbReference type="jPOST" id="Q8C0K5"/>
<dbReference type="PaxDb" id="10090-ENSMUSP00000043370"/>
<dbReference type="PeptideAtlas" id="Q8C0K5"/>
<dbReference type="ProteomicsDB" id="273037">
    <molecule id="Q8C0K5-1"/>
</dbReference>
<dbReference type="ProteomicsDB" id="273038">
    <molecule id="Q8C0K5-2"/>
</dbReference>
<dbReference type="Pumba" id="Q8C0K5"/>
<dbReference type="Antibodypedia" id="28525">
    <property type="antibodies" value="74 antibodies from 17 providers"/>
</dbReference>
<dbReference type="DNASU" id="73132"/>
<dbReference type="Ensembl" id="ENSMUST00000044977.10">
    <molecule id="Q8C0K5-1"/>
    <property type="protein sequence ID" value="ENSMUSP00000043370.4"/>
    <property type="gene ID" value="ENSMUSG00000071253.9"/>
</dbReference>
<dbReference type="GeneID" id="73132"/>
<dbReference type="KEGG" id="mmu:73132"/>
<dbReference type="UCSC" id="uc007fjh.1">
    <molecule id="Q8C0K5-1"/>
    <property type="organism name" value="mouse"/>
</dbReference>
<dbReference type="UCSC" id="uc029qye.1">
    <molecule id="Q8C0K5-2"/>
    <property type="organism name" value="mouse"/>
</dbReference>
<dbReference type="AGR" id="MGI:1920382"/>
<dbReference type="CTD" id="8034"/>
<dbReference type="MGI" id="MGI:1920382">
    <property type="gene designation" value="Slc25a16"/>
</dbReference>
<dbReference type="VEuPathDB" id="HostDB:ENSMUSG00000071253"/>
<dbReference type="eggNOG" id="KOG0752">
    <property type="taxonomic scope" value="Eukaryota"/>
</dbReference>
<dbReference type="GeneTree" id="ENSGT00940000157520"/>
<dbReference type="InParanoid" id="Q8C0K5"/>
<dbReference type="OMA" id="YKMSVPK"/>
<dbReference type="OrthoDB" id="270584at2759"/>
<dbReference type="PhylomeDB" id="Q8C0K5"/>
<dbReference type="TreeFam" id="TF314806"/>
<dbReference type="Reactome" id="R-MMU-199220">
    <property type="pathway name" value="Vitamin B5 (pantothenate) metabolism"/>
</dbReference>
<dbReference type="BioGRID-ORCS" id="73132">
    <property type="hits" value="2 hits in 78 CRISPR screens"/>
</dbReference>
<dbReference type="ChiTaRS" id="Slc25a16">
    <property type="organism name" value="mouse"/>
</dbReference>
<dbReference type="PRO" id="PR:Q8C0K5"/>
<dbReference type="Proteomes" id="UP000000589">
    <property type="component" value="Chromosome 10"/>
</dbReference>
<dbReference type="RNAct" id="Q8C0K5">
    <property type="molecule type" value="protein"/>
</dbReference>
<dbReference type="Bgee" id="ENSMUSG00000071253">
    <property type="expression patterns" value="Expressed in left lobe of liver and 216 other cell types or tissues"/>
</dbReference>
<dbReference type="ExpressionAtlas" id="Q8C0K5">
    <property type="expression patterns" value="baseline and differential"/>
</dbReference>
<dbReference type="GO" id="GO:0005743">
    <property type="term" value="C:mitochondrial inner membrane"/>
    <property type="evidence" value="ECO:0000266"/>
    <property type="project" value="MGI"/>
</dbReference>
<dbReference type="GO" id="GO:0005739">
    <property type="term" value="C:mitochondrion"/>
    <property type="evidence" value="ECO:0007005"/>
    <property type="project" value="MGI"/>
</dbReference>
<dbReference type="GO" id="GO:0015291">
    <property type="term" value="F:secondary active transmembrane transporter activity"/>
    <property type="evidence" value="ECO:0000266"/>
    <property type="project" value="MGI"/>
</dbReference>
<dbReference type="GO" id="GO:0015937">
    <property type="term" value="P:coenzyme A biosynthetic process"/>
    <property type="evidence" value="ECO:0000266"/>
    <property type="project" value="MGI"/>
</dbReference>
<dbReference type="FunFam" id="1.50.40.10:FF:000052">
    <property type="entry name" value="Solute carrier family 25 member 16"/>
    <property type="match status" value="1"/>
</dbReference>
<dbReference type="Gene3D" id="1.50.40.10">
    <property type="entry name" value="Mitochondrial carrier domain"/>
    <property type="match status" value="1"/>
</dbReference>
<dbReference type="InterPro" id="IPR002167">
    <property type="entry name" value="GDC-like"/>
</dbReference>
<dbReference type="InterPro" id="IPR002067">
    <property type="entry name" value="Mit_carrier"/>
</dbReference>
<dbReference type="InterPro" id="IPR018108">
    <property type="entry name" value="Mitochondrial_sb/sol_carrier"/>
</dbReference>
<dbReference type="InterPro" id="IPR023395">
    <property type="entry name" value="Mt_carrier_dom_sf"/>
</dbReference>
<dbReference type="PANTHER" id="PTHR24089">
    <property type="entry name" value="SOLUTE CARRIER FAMILY 25"/>
    <property type="match status" value="1"/>
</dbReference>
<dbReference type="Pfam" id="PF00153">
    <property type="entry name" value="Mito_carr"/>
    <property type="match status" value="3"/>
</dbReference>
<dbReference type="PRINTS" id="PR00928">
    <property type="entry name" value="GRAVESDC"/>
</dbReference>
<dbReference type="PRINTS" id="PR00926">
    <property type="entry name" value="MITOCARRIER"/>
</dbReference>
<dbReference type="SUPFAM" id="SSF103506">
    <property type="entry name" value="Mitochondrial carrier"/>
    <property type="match status" value="1"/>
</dbReference>
<dbReference type="PROSITE" id="PS50920">
    <property type="entry name" value="SOLCAR"/>
    <property type="match status" value="3"/>
</dbReference>
<reference key="1">
    <citation type="journal article" date="2005" name="Science">
        <title>The transcriptional landscape of the mammalian genome.</title>
        <authorList>
            <person name="Carninci P."/>
            <person name="Kasukawa T."/>
            <person name="Katayama S."/>
            <person name="Gough J."/>
            <person name="Frith M.C."/>
            <person name="Maeda N."/>
            <person name="Oyama R."/>
            <person name="Ravasi T."/>
            <person name="Lenhard B."/>
            <person name="Wells C."/>
            <person name="Kodzius R."/>
            <person name="Shimokawa K."/>
            <person name="Bajic V.B."/>
            <person name="Brenner S.E."/>
            <person name="Batalov S."/>
            <person name="Forrest A.R."/>
            <person name="Zavolan M."/>
            <person name="Davis M.J."/>
            <person name="Wilming L.G."/>
            <person name="Aidinis V."/>
            <person name="Allen J.E."/>
            <person name="Ambesi-Impiombato A."/>
            <person name="Apweiler R."/>
            <person name="Aturaliya R.N."/>
            <person name="Bailey T.L."/>
            <person name="Bansal M."/>
            <person name="Baxter L."/>
            <person name="Beisel K.W."/>
            <person name="Bersano T."/>
            <person name="Bono H."/>
            <person name="Chalk A.M."/>
            <person name="Chiu K.P."/>
            <person name="Choudhary V."/>
            <person name="Christoffels A."/>
            <person name="Clutterbuck D.R."/>
            <person name="Crowe M.L."/>
            <person name="Dalla E."/>
            <person name="Dalrymple B.P."/>
            <person name="de Bono B."/>
            <person name="Della Gatta G."/>
            <person name="di Bernardo D."/>
            <person name="Down T."/>
            <person name="Engstrom P."/>
            <person name="Fagiolini M."/>
            <person name="Faulkner G."/>
            <person name="Fletcher C.F."/>
            <person name="Fukushima T."/>
            <person name="Furuno M."/>
            <person name="Futaki S."/>
            <person name="Gariboldi M."/>
            <person name="Georgii-Hemming P."/>
            <person name="Gingeras T.R."/>
            <person name="Gojobori T."/>
            <person name="Green R.E."/>
            <person name="Gustincich S."/>
            <person name="Harbers M."/>
            <person name="Hayashi Y."/>
            <person name="Hensch T.K."/>
            <person name="Hirokawa N."/>
            <person name="Hill D."/>
            <person name="Huminiecki L."/>
            <person name="Iacono M."/>
            <person name="Ikeo K."/>
            <person name="Iwama A."/>
            <person name="Ishikawa T."/>
            <person name="Jakt M."/>
            <person name="Kanapin A."/>
            <person name="Katoh M."/>
            <person name="Kawasawa Y."/>
            <person name="Kelso J."/>
            <person name="Kitamura H."/>
            <person name="Kitano H."/>
            <person name="Kollias G."/>
            <person name="Krishnan S.P."/>
            <person name="Kruger A."/>
            <person name="Kummerfeld S.K."/>
            <person name="Kurochkin I.V."/>
            <person name="Lareau L.F."/>
            <person name="Lazarevic D."/>
            <person name="Lipovich L."/>
            <person name="Liu J."/>
            <person name="Liuni S."/>
            <person name="McWilliam S."/>
            <person name="Madan Babu M."/>
            <person name="Madera M."/>
            <person name="Marchionni L."/>
            <person name="Matsuda H."/>
            <person name="Matsuzawa S."/>
            <person name="Miki H."/>
            <person name="Mignone F."/>
            <person name="Miyake S."/>
            <person name="Morris K."/>
            <person name="Mottagui-Tabar S."/>
            <person name="Mulder N."/>
            <person name="Nakano N."/>
            <person name="Nakauchi H."/>
            <person name="Ng P."/>
            <person name="Nilsson R."/>
            <person name="Nishiguchi S."/>
            <person name="Nishikawa S."/>
            <person name="Nori F."/>
            <person name="Ohara O."/>
            <person name="Okazaki Y."/>
            <person name="Orlando V."/>
            <person name="Pang K.C."/>
            <person name="Pavan W.J."/>
            <person name="Pavesi G."/>
            <person name="Pesole G."/>
            <person name="Petrovsky N."/>
            <person name="Piazza S."/>
            <person name="Reed J."/>
            <person name="Reid J.F."/>
            <person name="Ring B.Z."/>
            <person name="Ringwald M."/>
            <person name="Rost B."/>
            <person name="Ruan Y."/>
            <person name="Salzberg S.L."/>
            <person name="Sandelin A."/>
            <person name="Schneider C."/>
            <person name="Schoenbach C."/>
            <person name="Sekiguchi K."/>
            <person name="Semple C.A."/>
            <person name="Seno S."/>
            <person name="Sessa L."/>
            <person name="Sheng Y."/>
            <person name="Shibata Y."/>
            <person name="Shimada H."/>
            <person name="Shimada K."/>
            <person name="Silva D."/>
            <person name="Sinclair B."/>
            <person name="Sperling S."/>
            <person name="Stupka E."/>
            <person name="Sugiura K."/>
            <person name="Sultana R."/>
            <person name="Takenaka Y."/>
            <person name="Taki K."/>
            <person name="Tammoja K."/>
            <person name="Tan S.L."/>
            <person name="Tang S."/>
            <person name="Taylor M.S."/>
            <person name="Tegner J."/>
            <person name="Teichmann S.A."/>
            <person name="Ueda H.R."/>
            <person name="van Nimwegen E."/>
            <person name="Verardo R."/>
            <person name="Wei C.L."/>
            <person name="Yagi K."/>
            <person name="Yamanishi H."/>
            <person name="Zabarovsky E."/>
            <person name="Zhu S."/>
            <person name="Zimmer A."/>
            <person name="Hide W."/>
            <person name="Bult C."/>
            <person name="Grimmond S.M."/>
            <person name="Teasdale R.D."/>
            <person name="Liu E.T."/>
            <person name="Brusic V."/>
            <person name="Quackenbush J."/>
            <person name="Wahlestedt C."/>
            <person name="Mattick J.S."/>
            <person name="Hume D.A."/>
            <person name="Kai C."/>
            <person name="Sasaki D."/>
            <person name="Tomaru Y."/>
            <person name="Fukuda S."/>
            <person name="Kanamori-Katayama M."/>
            <person name="Suzuki M."/>
            <person name="Aoki J."/>
            <person name="Arakawa T."/>
            <person name="Iida J."/>
            <person name="Imamura K."/>
            <person name="Itoh M."/>
            <person name="Kato T."/>
            <person name="Kawaji H."/>
            <person name="Kawagashira N."/>
            <person name="Kawashima T."/>
            <person name="Kojima M."/>
            <person name="Kondo S."/>
            <person name="Konno H."/>
            <person name="Nakano K."/>
            <person name="Ninomiya N."/>
            <person name="Nishio T."/>
            <person name="Okada M."/>
            <person name="Plessy C."/>
            <person name="Shibata K."/>
            <person name="Shiraki T."/>
            <person name="Suzuki S."/>
            <person name="Tagami M."/>
            <person name="Waki K."/>
            <person name="Watahiki A."/>
            <person name="Okamura-Oho Y."/>
            <person name="Suzuki H."/>
            <person name="Kawai J."/>
            <person name="Hayashizaki Y."/>
        </authorList>
    </citation>
    <scope>NUCLEOTIDE SEQUENCE [LARGE SCALE MRNA] (ISOFORM 1)</scope>
    <source>
        <strain>C57BL/6J</strain>
        <tissue>Thymus</tissue>
    </source>
</reference>
<reference key="2">
    <citation type="journal article" date="2004" name="Genome Res.">
        <title>The status, quality, and expansion of the NIH full-length cDNA project: the Mammalian Gene Collection (MGC).</title>
        <authorList>
            <consortium name="The MGC Project Team"/>
        </authorList>
    </citation>
    <scope>NUCLEOTIDE SEQUENCE [LARGE SCALE MRNA] (ISOFORMS 1 AND 2)</scope>
    <source>
        <tissue>Brain</tissue>
        <tissue>Jaw</tissue>
        <tissue>Limb</tissue>
    </source>
</reference>
<reference key="3">
    <citation type="journal article" date="2010" name="Cell">
        <title>A tissue-specific atlas of mouse protein phosphorylation and expression.</title>
        <authorList>
            <person name="Huttlin E.L."/>
            <person name="Jedrychowski M.P."/>
            <person name="Elias J.E."/>
            <person name="Goswami T."/>
            <person name="Rad R."/>
            <person name="Beausoleil S.A."/>
            <person name="Villen J."/>
            <person name="Haas W."/>
            <person name="Sowa M.E."/>
            <person name="Gygi S.P."/>
        </authorList>
    </citation>
    <scope>IDENTIFICATION BY MASS SPECTROMETRY [LARGE SCALE ANALYSIS]</scope>
    <source>
        <tissue>Brown adipose tissue</tissue>
        <tissue>Kidney</tissue>
        <tissue>Liver</tissue>
    </source>
</reference>
<gene>
    <name evidence="6" type="primary">Slc25a16</name>
    <name type="synonym">Gda</name>
</gene>
<accession>Q8C0K5</accession>
<accession>B2RSS4</accession>
<accession>Q6P6K8</accession>
<proteinExistence type="evidence at protein level"/>